<organism>
    <name type="scientific">Roseobacter denitrificans (strain ATCC 33942 / OCh 114)</name>
    <name type="common">Erythrobacter sp. (strain OCh 114)</name>
    <name type="synonym">Roseobacter denitrificans</name>
    <dbReference type="NCBI Taxonomy" id="375451"/>
    <lineage>
        <taxon>Bacteria</taxon>
        <taxon>Pseudomonadati</taxon>
        <taxon>Pseudomonadota</taxon>
        <taxon>Alphaproteobacteria</taxon>
        <taxon>Rhodobacterales</taxon>
        <taxon>Roseobacteraceae</taxon>
        <taxon>Roseobacter</taxon>
    </lineage>
</organism>
<proteinExistence type="inferred from homology"/>
<dbReference type="EMBL" id="CP000362">
    <property type="protein sequence ID" value="ABG30949.1"/>
    <property type="molecule type" value="Genomic_DNA"/>
</dbReference>
<dbReference type="RefSeq" id="WP_011567569.1">
    <property type="nucleotide sequence ID" value="NC_008209.1"/>
</dbReference>
<dbReference type="SMR" id="Q16AP4"/>
<dbReference type="STRING" id="375451.RD1_1304"/>
<dbReference type="KEGG" id="rde:RD1_1304"/>
<dbReference type="eggNOG" id="COG0254">
    <property type="taxonomic scope" value="Bacteria"/>
</dbReference>
<dbReference type="HOGENOM" id="CLU_114306_3_2_5"/>
<dbReference type="OrthoDB" id="9803251at2"/>
<dbReference type="Proteomes" id="UP000007029">
    <property type="component" value="Chromosome"/>
</dbReference>
<dbReference type="GO" id="GO:1990904">
    <property type="term" value="C:ribonucleoprotein complex"/>
    <property type="evidence" value="ECO:0007669"/>
    <property type="project" value="UniProtKB-KW"/>
</dbReference>
<dbReference type="GO" id="GO:0005840">
    <property type="term" value="C:ribosome"/>
    <property type="evidence" value="ECO:0007669"/>
    <property type="project" value="UniProtKB-KW"/>
</dbReference>
<dbReference type="GO" id="GO:0019843">
    <property type="term" value="F:rRNA binding"/>
    <property type="evidence" value="ECO:0007669"/>
    <property type="project" value="UniProtKB-KW"/>
</dbReference>
<dbReference type="GO" id="GO:0003735">
    <property type="term" value="F:structural constituent of ribosome"/>
    <property type="evidence" value="ECO:0007669"/>
    <property type="project" value="InterPro"/>
</dbReference>
<dbReference type="GO" id="GO:0006412">
    <property type="term" value="P:translation"/>
    <property type="evidence" value="ECO:0007669"/>
    <property type="project" value="InterPro"/>
</dbReference>
<dbReference type="Gene3D" id="4.10.830.30">
    <property type="entry name" value="Ribosomal protein L31"/>
    <property type="match status" value="1"/>
</dbReference>
<dbReference type="InterPro" id="IPR034704">
    <property type="entry name" value="Ribosomal_bL28/bL31-like_sf"/>
</dbReference>
<dbReference type="InterPro" id="IPR002150">
    <property type="entry name" value="Ribosomal_bL31"/>
</dbReference>
<dbReference type="InterPro" id="IPR042105">
    <property type="entry name" value="Ribosomal_bL31_sf"/>
</dbReference>
<dbReference type="NCBIfam" id="TIGR00105">
    <property type="entry name" value="L31"/>
    <property type="match status" value="1"/>
</dbReference>
<dbReference type="NCBIfam" id="NF001809">
    <property type="entry name" value="PRK00528.1"/>
    <property type="match status" value="1"/>
</dbReference>
<dbReference type="PANTHER" id="PTHR33280">
    <property type="entry name" value="50S RIBOSOMAL PROTEIN L31, CHLOROPLASTIC"/>
    <property type="match status" value="1"/>
</dbReference>
<dbReference type="PANTHER" id="PTHR33280:SF6">
    <property type="entry name" value="LARGE RIBOSOMAL SUBUNIT PROTEIN BL31A"/>
    <property type="match status" value="1"/>
</dbReference>
<dbReference type="Pfam" id="PF01197">
    <property type="entry name" value="Ribosomal_L31"/>
    <property type="match status" value="1"/>
</dbReference>
<dbReference type="PRINTS" id="PR01249">
    <property type="entry name" value="RIBOSOMALL31"/>
</dbReference>
<dbReference type="SUPFAM" id="SSF143800">
    <property type="entry name" value="L28p-like"/>
    <property type="match status" value="1"/>
</dbReference>
<dbReference type="PROSITE" id="PS01143">
    <property type="entry name" value="RIBOSOMAL_L31"/>
    <property type="match status" value="1"/>
</dbReference>
<protein>
    <recommendedName>
        <fullName evidence="2">Large ribosomal subunit protein bL31</fullName>
    </recommendedName>
    <alternativeName>
        <fullName>50S ribosomal protein L31</fullName>
    </alternativeName>
</protein>
<sequence>MKADTHPDYHIIDVKMTDGTVVQMKSTWGKEGDQLSLDIDPSAHPAWTGGSSRLLDTGGRVSKFKNKYAGLGF</sequence>
<comment type="function">
    <text evidence="1">Binds the 23S rRNA.</text>
</comment>
<comment type="subunit">
    <text evidence="1">Part of the 50S ribosomal subunit.</text>
</comment>
<comment type="similarity">
    <text evidence="2">Belongs to the bacterial ribosomal protein bL31 family. Type A subfamily.</text>
</comment>
<keyword id="KW-1185">Reference proteome</keyword>
<keyword id="KW-0687">Ribonucleoprotein</keyword>
<keyword id="KW-0689">Ribosomal protein</keyword>
<keyword id="KW-0694">RNA-binding</keyword>
<keyword id="KW-0699">rRNA-binding</keyword>
<name>RL31_ROSDO</name>
<gene>
    <name type="primary">rpmE</name>
    <name type="ordered locus">RD1_1304</name>
</gene>
<accession>Q16AP4</accession>
<feature type="chain" id="PRO_0000259224" description="Large ribosomal subunit protein bL31">
    <location>
        <begin position="1"/>
        <end position="73"/>
    </location>
</feature>
<reference key="1">
    <citation type="journal article" date="2007" name="J. Bacteriol.">
        <title>The complete genome sequence of Roseobacter denitrificans reveals a mixotrophic rather than photosynthetic metabolism.</title>
        <authorList>
            <person name="Swingley W.D."/>
            <person name="Sadekar S."/>
            <person name="Mastrian S.D."/>
            <person name="Matthies H.J."/>
            <person name="Hao J."/>
            <person name="Ramos H."/>
            <person name="Acharya C.R."/>
            <person name="Conrad A.L."/>
            <person name="Taylor H.L."/>
            <person name="Dejesa L.C."/>
            <person name="Shah M.K."/>
            <person name="O'Huallachain M.E."/>
            <person name="Lince M.T."/>
            <person name="Blankenship R.E."/>
            <person name="Beatty J.T."/>
            <person name="Touchman J.W."/>
        </authorList>
    </citation>
    <scope>NUCLEOTIDE SEQUENCE [LARGE SCALE GENOMIC DNA]</scope>
    <source>
        <strain>ATCC 33942 / OCh 114</strain>
    </source>
</reference>
<evidence type="ECO:0000250" key="1"/>
<evidence type="ECO:0000305" key="2"/>